<gene>
    <name type="ordered locus">HI_1560</name>
</gene>
<keyword id="KW-1003">Cell membrane</keyword>
<keyword id="KW-0472">Membrane</keyword>
<keyword id="KW-1185">Reference proteome</keyword>
<keyword id="KW-0812">Transmembrane</keyword>
<keyword id="KW-1133">Transmembrane helix</keyword>
<evidence type="ECO:0000255" key="1"/>
<evidence type="ECO:0000305" key="2"/>
<reference key="1">
    <citation type="journal article" date="1995" name="Science">
        <title>Whole-genome random sequencing and assembly of Haemophilus influenzae Rd.</title>
        <authorList>
            <person name="Fleischmann R.D."/>
            <person name="Adams M.D."/>
            <person name="White O."/>
            <person name="Clayton R.A."/>
            <person name="Kirkness E.F."/>
            <person name="Kerlavage A.R."/>
            <person name="Bult C.J."/>
            <person name="Tomb J.-F."/>
            <person name="Dougherty B.A."/>
            <person name="Merrick J.M."/>
            <person name="McKenney K."/>
            <person name="Sutton G.G."/>
            <person name="FitzHugh W."/>
            <person name="Fields C.A."/>
            <person name="Gocayne J.D."/>
            <person name="Scott J.D."/>
            <person name="Shirley R."/>
            <person name="Liu L.-I."/>
            <person name="Glodek A."/>
            <person name="Kelley J.M."/>
            <person name="Weidman J.F."/>
            <person name="Phillips C.A."/>
            <person name="Spriggs T."/>
            <person name="Hedblom E."/>
            <person name="Cotton M.D."/>
            <person name="Utterback T.R."/>
            <person name="Hanna M.C."/>
            <person name="Nguyen D.T."/>
            <person name="Saudek D.M."/>
            <person name="Brandon R.C."/>
            <person name="Fine L.D."/>
            <person name="Fritchman J.L."/>
            <person name="Fuhrmann J.L."/>
            <person name="Geoghagen N.S.M."/>
            <person name="Gnehm C.L."/>
            <person name="McDonald L.A."/>
            <person name="Small K.V."/>
            <person name="Fraser C.M."/>
            <person name="Smith H.O."/>
            <person name="Venter J.C."/>
        </authorList>
    </citation>
    <scope>NUCLEOTIDE SEQUENCE [LARGE SCALE GENOMIC DNA]</scope>
    <source>
        <strain>ATCC 51907 / DSM 11121 / KW20 / Rd</strain>
    </source>
</reference>
<comment type="subcellular location">
    <subcellularLocation>
        <location evidence="2">Cell membrane</location>
        <topology evidence="2">Multi-pass membrane protein</topology>
    </subcellularLocation>
</comment>
<feature type="chain" id="PRO_0000078085" description="Uncharacterized protein HI_1560">
    <location>
        <begin position="1"/>
        <end position="156"/>
    </location>
</feature>
<feature type="transmembrane region" description="Helical" evidence="1">
    <location>
        <begin position="46"/>
        <end position="66"/>
    </location>
</feature>
<feature type="transmembrane region" description="Helical" evidence="1">
    <location>
        <begin position="114"/>
        <end position="134"/>
    </location>
</feature>
<proteinExistence type="predicted"/>
<organism>
    <name type="scientific">Haemophilus influenzae (strain ATCC 51907 / DSM 11121 / KW20 / Rd)</name>
    <dbReference type="NCBI Taxonomy" id="71421"/>
    <lineage>
        <taxon>Bacteria</taxon>
        <taxon>Pseudomonadati</taxon>
        <taxon>Pseudomonadota</taxon>
        <taxon>Gammaproteobacteria</taxon>
        <taxon>Pasteurellales</taxon>
        <taxon>Pasteurellaceae</taxon>
        <taxon>Haemophilus</taxon>
    </lineage>
</organism>
<protein>
    <recommendedName>
        <fullName>Uncharacterized protein HI_1560</fullName>
    </recommendedName>
</protein>
<accession>P44253</accession>
<dbReference type="EMBL" id="L42023">
    <property type="protein sequence ID" value="AAC23211.1"/>
    <property type="molecule type" value="Genomic_DNA"/>
</dbReference>
<dbReference type="PIR" id="B64036">
    <property type="entry name" value="B64036"/>
</dbReference>
<dbReference type="RefSeq" id="NP_439709.1">
    <property type="nucleotide sequence ID" value="NC_000907.1"/>
</dbReference>
<dbReference type="STRING" id="71421.HI_1560"/>
<dbReference type="EnsemblBacteria" id="AAC23211">
    <property type="protein sequence ID" value="AAC23211"/>
    <property type="gene ID" value="HI_1560"/>
</dbReference>
<dbReference type="KEGG" id="hin:HI_1560"/>
<dbReference type="PATRIC" id="fig|71421.8.peg.1631"/>
<dbReference type="eggNOG" id="COG1714">
    <property type="taxonomic scope" value="Bacteria"/>
</dbReference>
<dbReference type="HOGENOM" id="CLU_137884_0_0_6"/>
<dbReference type="OrthoDB" id="5687500at2"/>
<dbReference type="BioCyc" id="HINF71421:G1GJ1-1580-MONOMER"/>
<dbReference type="Proteomes" id="UP000000579">
    <property type="component" value="Chromosome"/>
</dbReference>
<dbReference type="GO" id="GO:0005886">
    <property type="term" value="C:plasma membrane"/>
    <property type="evidence" value="ECO:0007669"/>
    <property type="project" value="UniProtKB-SubCell"/>
</dbReference>
<dbReference type="InterPro" id="IPR051791">
    <property type="entry name" value="Pra-immunoreactive"/>
</dbReference>
<dbReference type="InterPro" id="IPR010432">
    <property type="entry name" value="RDD"/>
</dbReference>
<dbReference type="PANTHER" id="PTHR36115:SF4">
    <property type="entry name" value="MEMBRANE PROTEIN"/>
    <property type="match status" value="1"/>
</dbReference>
<dbReference type="PANTHER" id="PTHR36115">
    <property type="entry name" value="PROLINE-RICH ANTIGEN HOMOLOG-RELATED"/>
    <property type="match status" value="1"/>
</dbReference>
<dbReference type="Pfam" id="PF06271">
    <property type="entry name" value="RDD"/>
    <property type="match status" value="1"/>
</dbReference>
<name>Y1560_HAEIN</name>
<sequence length="156" mass="17582">MSFLTLKGNKMIIENQKDAEFSSAFKPSQLAQASRFKRWLASMINGLVLWVMAGLGFALGDFAGVVGMIVYAGFQLYFMKTYGQTMAKRWLGLRVFNYHTNQPVEFGKYIGREIIDILLAWTSFLLIISGIVALVRDDRRSLTDLVAGTIVLKDEK</sequence>